<feature type="chain" id="PRO_0000116564" description="Uncharacterized protein C4G9.04c">
    <location>
        <begin position="1"/>
        <end position="638"/>
    </location>
</feature>
<feature type="domain" description="CID" evidence="1">
    <location>
        <begin position="1"/>
        <end position="138"/>
    </location>
</feature>
<feature type="region of interest" description="Disordered" evidence="2">
    <location>
        <begin position="318"/>
        <end position="338"/>
    </location>
</feature>
<feature type="region of interest" description="Disordered" evidence="2">
    <location>
        <begin position="615"/>
        <end position="638"/>
    </location>
</feature>
<protein>
    <recommendedName>
        <fullName>Uncharacterized protein C4G9.04c</fullName>
    </recommendedName>
</protein>
<organism>
    <name type="scientific">Schizosaccharomyces pombe (strain 972 / ATCC 24843)</name>
    <name type="common">Fission yeast</name>
    <dbReference type="NCBI Taxonomy" id="284812"/>
    <lineage>
        <taxon>Eukaryota</taxon>
        <taxon>Fungi</taxon>
        <taxon>Dikarya</taxon>
        <taxon>Ascomycota</taxon>
        <taxon>Taphrinomycotina</taxon>
        <taxon>Schizosaccharomycetes</taxon>
        <taxon>Schizosaccharomycetales</taxon>
        <taxon>Schizosaccharomycetaceae</taxon>
        <taxon>Schizosaccharomyces</taxon>
    </lineage>
</organism>
<name>YD14_SCHPO</name>
<evidence type="ECO:0000255" key="1">
    <source>
        <dbReference type="PROSITE-ProRule" id="PRU00724"/>
    </source>
</evidence>
<evidence type="ECO:0000256" key="2">
    <source>
        <dbReference type="SAM" id="MobiDB-lite"/>
    </source>
</evidence>
<sequence>MDLVELDYLSALEDLTFNSKPIIHTLTYIAQENEPYAISIVNAIEKHIQKCPPNCKLPALYLLDSISKNLGAPYTYFFGLHLFSTFMSAYTVVEPRLRLKLDQLLATWKQRPPNSSSLEPVFSPIVTAKIENALLKYKSTILRHQSPLLANTSISSFSAPIDANINSYSSFSDPASSYKPSLPSVPFGFQHISGTSPSPGFITLDSLLSDVNRMIVTEQARFIKNPYDNMAKKRFEILLQLKNVLSSSALPYDQLLAIKNQLAQLEKPASPSTSSVATSAPSVPSALSSISSTPFMKPSIPSTIPTIPSAYSASVSSQPPLTHSYVHPGPQSHKYSLSSGPPASLYNANALTPEESSSIDSLFANLQAAGLVPPSAGGKSQGPQASCTEAVSLTADIDLSKSSLATPRPKLSSLLYENYSNQCANCGRRYGNDPESRKELDKHSDWHFRINKRIRESSLHGINRCWFVMEEEWVNSKEEEDLITETAQEIEEQRQKQMESVRSQYVLTPLDPIAASEPCPICQEKFQSVWHEEAEVWVFMNAVEEEGRIFHATCLQEVRPSENKHSNTNTSTQNLAEAAVSSNIKNATGDASKDSQPDVQNLLQGIDIQSILQALGKRKERDDSMDSMSSKVIKQESK</sequence>
<gene>
    <name type="ORF">SPAC4G9.04c</name>
</gene>
<accession>Q10237</accession>
<proteinExistence type="predicted"/>
<keyword id="KW-1185">Reference proteome</keyword>
<reference key="1">
    <citation type="journal article" date="2002" name="Nature">
        <title>The genome sequence of Schizosaccharomyces pombe.</title>
        <authorList>
            <person name="Wood V."/>
            <person name="Gwilliam R."/>
            <person name="Rajandream M.A."/>
            <person name="Lyne M.H."/>
            <person name="Lyne R."/>
            <person name="Stewart A."/>
            <person name="Sgouros J.G."/>
            <person name="Peat N."/>
            <person name="Hayles J."/>
            <person name="Baker S.G."/>
            <person name="Basham D."/>
            <person name="Bowman S."/>
            <person name="Brooks K."/>
            <person name="Brown D."/>
            <person name="Brown S."/>
            <person name="Chillingworth T."/>
            <person name="Churcher C.M."/>
            <person name="Collins M."/>
            <person name="Connor R."/>
            <person name="Cronin A."/>
            <person name="Davis P."/>
            <person name="Feltwell T."/>
            <person name="Fraser A."/>
            <person name="Gentles S."/>
            <person name="Goble A."/>
            <person name="Hamlin N."/>
            <person name="Harris D.E."/>
            <person name="Hidalgo J."/>
            <person name="Hodgson G."/>
            <person name="Holroyd S."/>
            <person name="Hornsby T."/>
            <person name="Howarth S."/>
            <person name="Huckle E.J."/>
            <person name="Hunt S."/>
            <person name="Jagels K."/>
            <person name="James K.D."/>
            <person name="Jones L."/>
            <person name="Jones M."/>
            <person name="Leather S."/>
            <person name="McDonald S."/>
            <person name="McLean J."/>
            <person name="Mooney P."/>
            <person name="Moule S."/>
            <person name="Mungall K.L."/>
            <person name="Murphy L.D."/>
            <person name="Niblett D."/>
            <person name="Odell C."/>
            <person name="Oliver K."/>
            <person name="O'Neil S."/>
            <person name="Pearson D."/>
            <person name="Quail M.A."/>
            <person name="Rabbinowitsch E."/>
            <person name="Rutherford K.M."/>
            <person name="Rutter S."/>
            <person name="Saunders D."/>
            <person name="Seeger K."/>
            <person name="Sharp S."/>
            <person name="Skelton J."/>
            <person name="Simmonds M.N."/>
            <person name="Squares R."/>
            <person name="Squares S."/>
            <person name="Stevens K."/>
            <person name="Taylor K."/>
            <person name="Taylor R.G."/>
            <person name="Tivey A."/>
            <person name="Walsh S.V."/>
            <person name="Warren T."/>
            <person name="Whitehead S."/>
            <person name="Woodward J.R."/>
            <person name="Volckaert G."/>
            <person name="Aert R."/>
            <person name="Robben J."/>
            <person name="Grymonprez B."/>
            <person name="Weltjens I."/>
            <person name="Vanstreels E."/>
            <person name="Rieger M."/>
            <person name="Schaefer M."/>
            <person name="Mueller-Auer S."/>
            <person name="Gabel C."/>
            <person name="Fuchs M."/>
            <person name="Duesterhoeft A."/>
            <person name="Fritzc C."/>
            <person name="Holzer E."/>
            <person name="Moestl D."/>
            <person name="Hilbert H."/>
            <person name="Borzym K."/>
            <person name="Langer I."/>
            <person name="Beck A."/>
            <person name="Lehrach H."/>
            <person name="Reinhardt R."/>
            <person name="Pohl T.M."/>
            <person name="Eger P."/>
            <person name="Zimmermann W."/>
            <person name="Wedler H."/>
            <person name="Wambutt R."/>
            <person name="Purnelle B."/>
            <person name="Goffeau A."/>
            <person name="Cadieu E."/>
            <person name="Dreano S."/>
            <person name="Gloux S."/>
            <person name="Lelaure V."/>
            <person name="Mottier S."/>
            <person name="Galibert F."/>
            <person name="Aves S.J."/>
            <person name="Xiang Z."/>
            <person name="Hunt C."/>
            <person name="Moore K."/>
            <person name="Hurst S.M."/>
            <person name="Lucas M."/>
            <person name="Rochet M."/>
            <person name="Gaillardin C."/>
            <person name="Tallada V.A."/>
            <person name="Garzon A."/>
            <person name="Thode G."/>
            <person name="Daga R.R."/>
            <person name="Cruzado L."/>
            <person name="Jimenez J."/>
            <person name="Sanchez M."/>
            <person name="del Rey F."/>
            <person name="Benito J."/>
            <person name="Dominguez A."/>
            <person name="Revuelta J.L."/>
            <person name="Moreno S."/>
            <person name="Armstrong J."/>
            <person name="Forsburg S.L."/>
            <person name="Cerutti L."/>
            <person name="Lowe T."/>
            <person name="McCombie W.R."/>
            <person name="Paulsen I."/>
            <person name="Potashkin J."/>
            <person name="Shpakovski G.V."/>
            <person name="Ussery D."/>
            <person name="Barrell B.G."/>
            <person name="Nurse P."/>
        </authorList>
    </citation>
    <scope>NUCLEOTIDE SEQUENCE [LARGE SCALE GENOMIC DNA]</scope>
    <source>
        <strain>972 / ATCC 24843</strain>
    </source>
</reference>
<dbReference type="EMBL" id="CU329670">
    <property type="protein sequence ID" value="CAA93554.1"/>
    <property type="molecule type" value="Genomic_DNA"/>
</dbReference>
<dbReference type="PIR" id="T38863">
    <property type="entry name" value="T38863"/>
</dbReference>
<dbReference type="SMR" id="Q10237"/>
<dbReference type="BioGRID" id="279472">
    <property type="interactions" value="12"/>
</dbReference>
<dbReference type="FunCoup" id="Q10237">
    <property type="interactions" value="341"/>
</dbReference>
<dbReference type="IntAct" id="Q10237">
    <property type="interactions" value="1"/>
</dbReference>
<dbReference type="MINT" id="Q10237"/>
<dbReference type="STRING" id="284812.Q10237"/>
<dbReference type="iPTMnet" id="Q10237"/>
<dbReference type="PaxDb" id="4896-SPAC4G9.04c.1"/>
<dbReference type="EnsemblFungi" id="SPAC4G9.04c.1">
    <property type="protein sequence ID" value="SPAC4G9.04c.1:pep"/>
    <property type="gene ID" value="SPAC4G9.04c"/>
</dbReference>
<dbReference type="KEGG" id="spo:2543037"/>
<dbReference type="PomBase" id="SPAC4G9.04c"/>
<dbReference type="VEuPathDB" id="FungiDB:SPAC4G9.04c"/>
<dbReference type="eggNOG" id="KOG2071">
    <property type="taxonomic scope" value="Eukaryota"/>
</dbReference>
<dbReference type="HOGENOM" id="CLU_015606_0_0_1"/>
<dbReference type="InParanoid" id="Q10237"/>
<dbReference type="OMA" id="ARSDFAN"/>
<dbReference type="PhylomeDB" id="Q10237"/>
<dbReference type="PRO" id="PR:Q10237"/>
<dbReference type="Proteomes" id="UP000002485">
    <property type="component" value="Chromosome I"/>
</dbReference>
<dbReference type="GO" id="GO:0000785">
    <property type="term" value="C:chromatin"/>
    <property type="evidence" value="ECO:0000314"/>
    <property type="project" value="PomBase"/>
</dbReference>
<dbReference type="GO" id="GO:0071920">
    <property type="term" value="C:cleavage body"/>
    <property type="evidence" value="ECO:0000314"/>
    <property type="project" value="PomBase"/>
</dbReference>
<dbReference type="GO" id="GO:0005737">
    <property type="term" value="C:cytoplasm"/>
    <property type="evidence" value="ECO:0000318"/>
    <property type="project" value="GO_Central"/>
</dbReference>
<dbReference type="GO" id="GO:0033620">
    <property type="term" value="C:Mei2 nuclear dot complex"/>
    <property type="evidence" value="ECO:0000314"/>
    <property type="project" value="PomBase"/>
</dbReference>
<dbReference type="GO" id="GO:0005849">
    <property type="term" value="C:mRNA cleavage factor complex"/>
    <property type="evidence" value="ECO:0000318"/>
    <property type="project" value="GO_Central"/>
</dbReference>
<dbReference type="GO" id="GO:0005848">
    <property type="term" value="C:mRNA cleavage stimulating factor complex"/>
    <property type="evidence" value="ECO:0000266"/>
    <property type="project" value="PomBase"/>
</dbReference>
<dbReference type="GO" id="GO:0005634">
    <property type="term" value="C:nucleus"/>
    <property type="evidence" value="ECO:0000314"/>
    <property type="project" value="PomBase"/>
</dbReference>
<dbReference type="GO" id="GO:0003729">
    <property type="term" value="F:mRNA binding"/>
    <property type="evidence" value="ECO:0000266"/>
    <property type="project" value="PomBase"/>
</dbReference>
<dbReference type="GO" id="GO:0099122">
    <property type="term" value="F:RNA polymerase II C-terminal domain binding"/>
    <property type="evidence" value="ECO:0000353"/>
    <property type="project" value="PomBase"/>
</dbReference>
<dbReference type="GO" id="GO:0000993">
    <property type="term" value="F:RNA polymerase II complex binding"/>
    <property type="evidence" value="ECO:0000318"/>
    <property type="project" value="GO_Central"/>
</dbReference>
<dbReference type="GO" id="GO:0180010">
    <property type="term" value="P:co-transcriptional mRNA 3'-end processing, cleavage and polyadenylation pathway"/>
    <property type="evidence" value="ECO:0000305"/>
    <property type="project" value="PomBase"/>
</dbReference>
<dbReference type="GO" id="GO:0006369">
    <property type="term" value="P:termination of RNA polymerase II transcription"/>
    <property type="evidence" value="ECO:0000266"/>
    <property type="project" value="PomBase"/>
</dbReference>
<dbReference type="CDD" id="cd16982">
    <property type="entry name" value="CID_Pcf11"/>
    <property type="match status" value="1"/>
</dbReference>
<dbReference type="FunFam" id="1.25.40.90:FF:000016">
    <property type="entry name" value="mRNA cleavage factor complex component Pcf11"/>
    <property type="match status" value="1"/>
</dbReference>
<dbReference type="Gene3D" id="1.25.40.90">
    <property type="match status" value="1"/>
</dbReference>
<dbReference type="InterPro" id="IPR006569">
    <property type="entry name" value="CID_dom"/>
</dbReference>
<dbReference type="InterPro" id="IPR008942">
    <property type="entry name" value="ENTH_VHS"/>
</dbReference>
<dbReference type="InterPro" id="IPR045154">
    <property type="entry name" value="PCF11-like"/>
</dbReference>
<dbReference type="InterPro" id="IPR054127">
    <property type="entry name" value="Pcf11_C"/>
</dbReference>
<dbReference type="InterPro" id="IPR047415">
    <property type="entry name" value="Pcf11_CID"/>
</dbReference>
<dbReference type="InterPro" id="IPR021605">
    <property type="entry name" value="Pcf11_Clp1-ID"/>
</dbReference>
<dbReference type="PANTHER" id="PTHR15921:SF3">
    <property type="entry name" value="PRE-MRNA CLEAVAGE COMPLEX 2 PROTEIN PCF11"/>
    <property type="match status" value="1"/>
</dbReference>
<dbReference type="PANTHER" id="PTHR15921">
    <property type="entry name" value="PRE-MRNA CLEAVAGE COMPLEX II"/>
    <property type="match status" value="1"/>
</dbReference>
<dbReference type="Pfam" id="PF04818">
    <property type="entry name" value="CID"/>
    <property type="match status" value="1"/>
</dbReference>
<dbReference type="Pfam" id="PF21936">
    <property type="entry name" value="Pcf11_C"/>
    <property type="match status" value="1"/>
</dbReference>
<dbReference type="Pfam" id="PF11526">
    <property type="entry name" value="Pfc11_Clp1_ID"/>
    <property type="match status" value="1"/>
</dbReference>
<dbReference type="SMART" id="SM00582">
    <property type="entry name" value="RPR"/>
    <property type="match status" value="1"/>
</dbReference>
<dbReference type="SUPFAM" id="SSF48464">
    <property type="entry name" value="ENTH/VHS domain"/>
    <property type="match status" value="1"/>
</dbReference>
<dbReference type="PROSITE" id="PS51391">
    <property type="entry name" value="CID"/>
    <property type="match status" value="1"/>
</dbReference>